<protein>
    <recommendedName>
        <fullName>Fiber protein 2</fullName>
    </recommendedName>
</protein>
<proteinExistence type="evidence at transcript level"/>
<name>SPIK2_ADE40</name>
<organismHost>
    <name type="scientific">Homo sapiens</name>
    <name type="common">Human</name>
    <dbReference type="NCBI Taxonomy" id="9606"/>
</organismHost>
<organism>
    <name type="scientific">Human adenovirus F serotype 40</name>
    <name type="common">HAdV-40</name>
    <name type="synonym">Human adenovirus 40</name>
    <dbReference type="NCBI Taxonomy" id="28284"/>
    <lineage>
        <taxon>Viruses</taxon>
        <taxon>Varidnaviria</taxon>
        <taxon>Bamfordvirae</taxon>
        <taxon>Preplasmiviricota</taxon>
        <taxon>Tectiliviricetes</taxon>
        <taxon>Rowavirales</taxon>
        <taxon>Adenoviridae</taxon>
        <taxon>Mastadenovirus</taxon>
        <taxon>Human mastadenovirus F</taxon>
    </lineage>
</organism>
<keyword id="KW-0167">Capsid protein</keyword>
<keyword id="KW-1048">Host nucleus</keyword>
<keyword id="KW-0945">Host-virus interaction</keyword>
<keyword id="KW-0426">Late protein</keyword>
<keyword id="KW-1185">Reference proteome</keyword>
<keyword id="KW-1233">Viral attachment to host adhesion receptor</keyword>
<keyword id="KW-1161">Viral attachment to host cell</keyword>
<keyword id="KW-0946">Virion</keyword>
<keyword id="KW-1160">Virus entry into host cell</keyword>
<evidence type="ECO:0000250" key="1"/>
<evidence type="ECO:0000305" key="2"/>
<sequence length="387" mass="41347">MKRTRIEDDFNPVYPYDTSSTPSIPYVAPPFVSSDGLQENPPGVLALKYTDPITTNAKHELTLKLGSNITLQNGLLSATVPTVSPPLTNSNNSLGLATSAPIAVSANSLTLATAAPLTVSNNQLSINTGRGLVITNNAVAVNPTGALGFNNTGALQLNAAGGMRVDGANLILHVAYPFEAINQLTLRLENGLEVTNGGKLNVKLGSGLQFDNNGRITISNRIQTRGVTSLTTIWSISPTPNCSIYETQDANLFLCLTKNGAHVLGTITIKGLKGALREMNDNALSVKLPFDNQGNLLNCALESSTWRYQETNAVASNALTFMPNSTVYPRNKTADPGNMLIQISPNITFSVVYNEINSGYAFTFKWSAEPGKPFHPPTAVFCYITEQ</sequence>
<comment type="function">
    <text evidence="1">Forms spikes that protrude from each vertex of the icosahedral capsid. Interacts with host receptor CXCAR to provide virion initial attachment to target cell. Fiber proteins are shed during virus entry, when virus is still at the cell surface (By similarity).</text>
</comment>
<comment type="subunit">
    <text evidence="1">Homotrimer. Interacts with host receptor CXCAR. Interacts (via N-terminal tail region) with pentons (By similarity).</text>
</comment>
<comment type="subcellular location">
    <subcellularLocation>
        <location evidence="1">Virion</location>
    </subcellularLocation>
    <subcellularLocation>
        <location evidence="1">Host nucleus</location>
    </subcellularLocation>
    <text evidence="1">Anchored to the pentons, protrudes from the virion surface.</text>
</comment>
<comment type="induction">
    <text>Expressed in the late phase of the viral replicative cycle.</text>
</comment>
<comment type="domain">
    <text evidence="1">The tail region anchors the fiber to penton base capsomers, whereas the shaft, built from several repeated motifs, allows the knob to protrude from the virion.</text>
</comment>
<comment type="miscellaneous">
    <text evidence="1">All late proteins expressed from the major late promoter are produced by alternative splicing and alternative polyadenylation of the same gene giving rise to non-overlapping ORFs. A leader sequence is present in the N-terminus of all these mRNAs and is recognized by the viral shutoff protein to provide expression although conventional translation via ribosome scanning from the cap has been shut off in the host cell (By similarity).</text>
</comment>
<comment type="similarity">
    <text evidence="2">Belongs to the adenoviridae fiber family.</text>
</comment>
<dbReference type="EMBL" id="L19443">
    <property type="protein sequence ID" value="AAC13979.1"/>
    <property type="molecule type" value="Genomic_DNA"/>
</dbReference>
<dbReference type="EMBL" id="M28822">
    <property type="protein sequence ID" value="AAA03233.1"/>
    <property type="molecule type" value="Unassigned_DNA"/>
</dbReference>
<dbReference type="PIR" id="A40048">
    <property type="entry name" value="ERADY4"/>
</dbReference>
<dbReference type="RefSeq" id="NP_040875.1">
    <property type="nucleotide sequence ID" value="NC_001454.1"/>
</dbReference>
<dbReference type="SMR" id="P18048"/>
<dbReference type="GeneID" id="2715923"/>
<dbReference type="KEGG" id="vg:2715923"/>
<dbReference type="Proteomes" id="UP000151954">
    <property type="component" value="Segment"/>
</dbReference>
<dbReference type="GO" id="GO:0042025">
    <property type="term" value="C:host cell nucleus"/>
    <property type="evidence" value="ECO:0007669"/>
    <property type="project" value="UniProtKB-SubCell"/>
</dbReference>
<dbReference type="GO" id="GO:0019028">
    <property type="term" value="C:viral capsid"/>
    <property type="evidence" value="ECO:0007669"/>
    <property type="project" value="UniProtKB-KW"/>
</dbReference>
<dbReference type="GO" id="GO:0098671">
    <property type="term" value="P:adhesion receptor-mediated virion attachment to host cell"/>
    <property type="evidence" value="ECO:0007669"/>
    <property type="project" value="UniProtKB-KW"/>
</dbReference>
<dbReference type="GO" id="GO:0007155">
    <property type="term" value="P:cell adhesion"/>
    <property type="evidence" value="ECO:0007669"/>
    <property type="project" value="InterPro"/>
</dbReference>
<dbReference type="GO" id="GO:0046718">
    <property type="term" value="P:symbiont entry into host cell"/>
    <property type="evidence" value="ECO:0007669"/>
    <property type="project" value="UniProtKB-KW"/>
</dbReference>
<dbReference type="Gene3D" id="6.20.10.20">
    <property type="match status" value="1"/>
</dbReference>
<dbReference type="Gene3D" id="2.60.90.10">
    <property type="entry name" value="Adenovirus pIV-related, attachment domain"/>
    <property type="match status" value="1"/>
</dbReference>
<dbReference type="Gene3D" id="2.10.25.20">
    <property type="entry name" value="reovirus attachment protein sigma1, domain 1"/>
    <property type="match status" value="1"/>
</dbReference>
<dbReference type="InterPro" id="IPR000931">
    <property type="entry name" value="Adeno_fibre"/>
</dbReference>
<dbReference type="InterPro" id="IPR000978">
    <property type="entry name" value="Adeno_fibre_knob"/>
</dbReference>
<dbReference type="InterPro" id="IPR000939">
    <property type="entry name" value="Adenobir_fibre_prot_rpt/shaft"/>
</dbReference>
<dbReference type="InterPro" id="IPR008982">
    <property type="entry name" value="Adenovirus_pIV-like_att"/>
</dbReference>
<dbReference type="InterPro" id="IPR009013">
    <property type="entry name" value="Attachment_protein_shaft_sf"/>
</dbReference>
<dbReference type="Pfam" id="PF00541">
    <property type="entry name" value="Adeno_knob"/>
    <property type="match status" value="1"/>
</dbReference>
<dbReference type="Pfam" id="PF00608">
    <property type="entry name" value="Adeno_shaft"/>
    <property type="match status" value="3"/>
</dbReference>
<dbReference type="PRINTS" id="PR00307">
    <property type="entry name" value="ADENOVSFIBRE"/>
</dbReference>
<dbReference type="SUPFAM" id="SSF51225">
    <property type="entry name" value="Fibre shaft of virus attachment proteins"/>
    <property type="match status" value="2"/>
</dbReference>
<dbReference type="SUPFAM" id="SSF49835">
    <property type="entry name" value="Virus attachment protein globular domain"/>
    <property type="match status" value="1"/>
</dbReference>
<accession>P18048</accession>
<feature type="chain" id="PRO_0000221800" description="Fiber protein 2">
    <location>
        <begin position="1"/>
        <end position="387"/>
    </location>
</feature>
<feature type="sequence conflict" description="In Ref. 2 and 3." evidence="2" ref="2 3">
    <original>G</original>
    <variation>S</variation>
    <location>
        <position position="226"/>
    </location>
</feature>
<reference key="1">
    <citation type="journal article" date="1993" name="J. Mol. Biol.">
        <title>The DNA sequence of adenovirus type 40.</title>
        <authorList>
            <person name="Davison A.J."/>
            <person name="Telford E.A."/>
            <person name="Watson M.S."/>
            <person name="McBride K."/>
            <person name="Mautner V."/>
        </authorList>
    </citation>
    <scope>NUCLEOTIDE SEQUENCE [LARGE SCALE GENOMIC DNA]</scope>
    <source>
        <strain>Dugan</strain>
    </source>
</reference>
<reference key="2">
    <citation type="journal article" date="1993" name="Virology">
        <title>Adenovirus type 40 virions contain two distinct fibers.</title>
        <authorList>
            <person name="Kidd A.H."/>
            <person name="Chroboczek J."/>
            <person name="Cusack S."/>
            <person name="Ruigrok R.W.H."/>
        </authorList>
    </citation>
    <scope>NUCLEOTIDE SEQUENCE [GENOMIC DNA]</scope>
</reference>
<reference key="3">
    <citation type="journal article" date="1989" name="Virology">
        <title>Sequence characterization of the adenovirus 40 fiber gene.</title>
        <authorList>
            <person name="Kidd A.H."/>
            <person name="Erasmus M.J."/>
        </authorList>
    </citation>
    <scope>NUCLEOTIDE SEQUENCE [GENOMIC DNA] OF 167-387</scope>
</reference>
<reference key="4">
    <citation type="journal article" date="2005" name="J. Virol.">
        <title>Adenovirus receptors.</title>
        <authorList>
            <person name="Zhang Y."/>
            <person name="Bergelson J.M."/>
        </authorList>
    </citation>
    <scope>REVIEW</scope>
</reference>